<dbReference type="EC" id="5.6.1.7" evidence="1"/>
<dbReference type="EMBL" id="CP001078">
    <property type="protein sequence ID" value="ACD54085.1"/>
    <property type="molecule type" value="Genomic_DNA"/>
</dbReference>
<dbReference type="RefSeq" id="WP_012451848.1">
    <property type="nucleotide sequence ID" value="NC_010723.1"/>
</dbReference>
<dbReference type="SMR" id="B2UZ02"/>
<dbReference type="KEGG" id="cbt:CLH_0374"/>
<dbReference type="HOGENOM" id="CLU_016503_3_0_9"/>
<dbReference type="GO" id="GO:0005737">
    <property type="term" value="C:cytoplasm"/>
    <property type="evidence" value="ECO:0007669"/>
    <property type="project" value="UniProtKB-SubCell"/>
</dbReference>
<dbReference type="GO" id="GO:0005524">
    <property type="term" value="F:ATP binding"/>
    <property type="evidence" value="ECO:0007669"/>
    <property type="project" value="UniProtKB-UniRule"/>
</dbReference>
<dbReference type="GO" id="GO:0140662">
    <property type="term" value="F:ATP-dependent protein folding chaperone"/>
    <property type="evidence" value="ECO:0007669"/>
    <property type="project" value="InterPro"/>
</dbReference>
<dbReference type="GO" id="GO:0016853">
    <property type="term" value="F:isomerase activity"/>
    <property type="evidence" value="ECO:0007669"/>
    <property type="project" value="UniProtKB-KW"/>
</dbReference>
<dbReference type="GO" id="GO:0051082">
    <property type="term" value="F:unfolded protein binding"/>
    <property type="evidence" value="ECO:0007669"/>
    <property type="project" value="UniProtKB-UniRule"/>
</dbReference>
<dbReference type="GO" id="GO:0042026">
    <property type="term" value="P:protein refolding"/>
    <property type="evidence" value="ECO:0007669"/>
    <property type="project" value="UniProtKB-UniRule"/>
</dbReference>
<dbReference type="CDD" id="cd03344">
    <property type="entry name" value="GroEL"/>
    <property type="match status" value="1"/>
</dbReference>
<dbReference type="FunFam" id="3.50.7.10:FF:000001">
    <property type="entry name" value="60 kDa chaperonin"/>
    <property type="match status" value="1"/>
</dbReference>
<dbReference type="Gene3D" id="3.50.7.10">
    <property type="entry name" value="GroEL"/>
    <property type="match status" value="1"/>
</dbReference>
<dbReference type="Gene3D" id="1.10.560.10">
    <property type="entry name" value="GroEL-like equatorial domain"/>
    <property type="match status" value="1"/>
</dbReference>
<dbReference type="Gene3D" id="3.30.260.10">
    <property type="entry name" value="TCP-1-like chaperonin intermediate domain"/>
    <property type="match status" value="1"/>
</dbReference>
<dbReference type="HAMAP" id="MF_00600">
    <property type="entry name" value="CH60"/>
    <property type="match status" value="1"/>
</dbReference>
<dbReference type="InterPro" id="IPR018370">
    <property type="entry name" value="Chaperonin_Cpn60_CS"/>
</dbReference>
<dbReference type="InterPro" id="IPR001844">
    <property type="entry name" value="Cpn60/GroEL"/>
</dbReference>
<dbReference type="InterPro" id="IPR002423">
    <property type="entry name" value="Cpn60/GroEL/TCP-1"/>
</dbReference>
<dbReference type="InterPro" id="IPR027409">
    <property type="entry name" value="GroEL-like_apical_dom_sf"/>
</dbReference>
<dbReference type="InterPro" id="IPR027413">
    <property type="entry name" value="GROEL-like_equatorial_sf"/>
</dbReference>
<dbReference type="InterPro" id="IPR027410">
    <property type="entry name" value="TCP-1-like_intermed_sf"/>
</dbReference>
<dbReference type="NCBIfam" id="TIGR02348">
    <property type="entry name" value="GroEL"/>
    <property type="match status" value="1"/>
</dbReference>
<dbReference type="NCBIfam" id="NF000592">
    <property type="entry name" value="PRK00013.1"/>
    <property type="match status" value="1"/>
</dbReference>
<dbReference type="NCBIfam" id="NF009487">
    <property type="entry name" value="PRK12849.1"/>
    <property type="match status" value="1"/>
</dbReference>
<dbReference type="NCBIfam" id="NF009488">
    <property type="entry name" value="PRK12850.1"/>
    <property type="match status" value="1"/>
</dbReference>
<dbReference type="NCBIfam" id="NF009489">
    <property type="entry name" value="PRK12851.1"/>
    <property type="match status" value="1"/>
</dbReference>
<dbReference type="PANTHER" id="PTHR45633">
    <property type="entry name" value="60 KDA HEAT SHOCK PROTEIN, MITOCHONDRIAL"/>
    <property type="match status" value="1"/>
</dbReference>
<dbReference type="Pfam" id="PF00118">
    <property type="entry name" value="Cpn60_TCP1"/>
    <property type="match status" value="1"/>
</dbReference>
<dbReference type="PRINTS" id="PR00298">
    <property type="entry name" value="CHAPERONIN60"/>
</dbReference>
<dbReference type="SUPFAM" id="SSF52029">
    <property type="entry name" value="GroEL apical domain-like"/>
    <property type="match status" value="1"/>
</dbReference>
<dbReference type="SUPFAM" id="SSF48592">
    <property type="entry name" value="GroEL equatorial domain-like"/>
    <property type="match status" value="1"/>
</dbReference>
<dbReference type="SUPFAM" id="SSF54849">
    <property type="entry name" value="GroEL-intermediate domain like"/>
    <property type="match status" value="1"/>
</dbReference>
<dbReference type="PROSITE" id="PS00296">
    <property type="entry name" value="CHAPERONINS_CPN60"/>
    <property type="match status" value="1"/>
</dbReference>
<evidence type="ECO:0000255" key="1">
    <source>
        <dbReference type="HAMAP-Rule" id="MF_00600"/>
    </source>
</evidence>
<name>CH60_CLOBA</name>
<proteinExistence type="inferred from homology"/>
<gene>
    <name evidence="1" type="primary">groEL</name>
    <name evidence="1" type="synonym">groL</name>
    <name type="ordered locus">CLH_0374</name>
</gene>
<sequence>MAKMLKFGEDARRSMQVGVDKLADTVKVTLGPKGRNVVLDKKFGSPLITNDGVSIAREIELEDPYENMGAQLVKEVATKTNDVAGDGTTTATLLAQAIIREGLKNVTAGANPMLIRNGIRMAVDKAVEEIKKISKPVEGKEDIARVAAISAADEEIGKLIADAMEKVGNEGVITIEESKSMGTELDVVEGMQFDRGYVSPYMSTDTEKMEAVLDNPYILITDKKIGNIQEILPILEQIVQCGKKLLIIAEDIEGEAMATLVVNKLRGTFTCVAVKAPGFGDRRKEMLQDIAILTGGTVIAEELGRDLKEVTLDMLGQAESVKVSKDNTVVVNGKGNPENIKDRISQIKAQIEETSSEFDKEKLQERLAKLAGGVAVIKVGAATETELKERKLRIEDALAATKAAVEEGIVPGGGTAYINVINAVEKLTSDVQDTELGIKIIVKSLEEPLRQIASNAGVEGSVIIEKVKNSEVGTGYDALYGKYVNMIKSGIVDPTKVTRSALQNAASVSATFLTTEAAVAEIPQKEPAMPAPGMGMDGMY</sequence>
<accession>B2UZ02</accession>
<keyword id="KW-0067">ATP-binding</keyword>
<keyword id="KW-0143">Chaperone</keyword>
<keyword id="KW-0963">Cytoplasm</keyword>
<keyword id="KW-0413">Isomerase</keyword>
<keyword id="KW-0547">Nucleotide-binding</keyword>
<reference key="1">
    <citation type="submission" date="2008-05" db="EMBL/GenBank/DDBJ databases">
        <title>Complete genome sequence of Clostridium botulinum E3 str. Alaska E43.</title>
        <authorList>
            <person name="Brinkac L.M."/>
            <person name="Brown J.L."/>
            <person name="Bruce D."/>
            <person name="Detter C."/>
            <person name="Munk C."/>
            <person name="Smith L.A."/>
            <person name="Smith T.J."/>
            <person name="Sutton G."/>
            <person name="Brettin T.S."/>
        </authorList>
    </citation>
    <scope>NUCLEOTIDE SEQUENCE [LARGE SCALE GENOMIC DNA]</scope>
    <source>
        <strain>Alaska E43 / Type E3</strain>
    </source>
</reference>
<comment type="function">
    <text evidence="1">Together with its co-chaperonin GroES, plays an essential role in assisting protein folding. The GroEL-GroES system forms a nano-cage that allows encapsulation of the non-native substrate proteins and provides a physical environment optimized to promote and accelerate protein folding.</text>
</comment>
<comment type="catalytic activity">
    <reaction evidence="1">
        <text>ATP + H2O + a folded polypeptide = ADP + phosphate + an unfolded polypeptide.</text>
        <dbReference type="EC" id="5.6.1.7"/>
    </reaction>
</comment>
<comment type="subunit">
    <text evidence="1">Forms a cylinder of 14 subunits composed of two heptameric rings stacked back-to-back. Interacts with the co-chaperonin GroES.</text>
</comment>
<comment type="subcellular location">
    <subcellularLocation>
        <location evidence="1">Cytoplasm</location>
    </subcellularLocation>
</comment>
<comment type="similarity">
    <text evidence="1">Belongs to the chaperonin (HSP60) family.</text>
</comment>
<feature type="chain" id="PRO_1000129992" description="Chaperonin GroEL">
    <location>
        <begin position="1"/>
        <end position="540"/>
    </location>
</feature>
<feature type="binding site" evidence="1">
    <location>
        <begin position="29"/>
        <end position="32"/>
    </location>
    <ligand>
        <name>ATP</name>
        <dbReference type="ChEBI" id="CHEBI:30616"/>
    </ligand>
</feature>
<feature type="binding site" evidence="1">
    <location>
        <begin position="86"/>
        <end position="90"/>
    </location>
    <ligand>
        <name>ATP</name>
        <dbReference type="ChEBI" id="CHEBI:30616"/>
    </ligand>
</feature>
<feature type="binding site" evidence="1">
    <location>
        <position position="413"/>
    </location>
    <ligand>
        <name>ATP</name>
        <dbReference type="ChEBI" id="CHEBI:30616"/>
    </ligand>
</feature>
<feature type="binding site" evidence="1">
    <location>
        <begin position="477"/>
        <end position="479"/>
    </location>
    <ligand>
        <name>ATP</name>
        <dbReference type="ChEBI" id="CHEBI:30616"/>
    </ligand>
</feature>
<feature type="binding site" evidence="1">
    <location>
        <position position="493"/>
    </location>
    <ligand>
        <name>ATP</name>
        <dbReference type="ChEBI" id="CHEBI:30616"/>
    </ligand>
</feature>
<organism>
    <name type="scientific">Clostridium botulinum (strain Alaska E43 / Type E3)</name>
    <dbReference type="NCBI Taxonomy" id="508767"/>
    <lineage>
        <taxon>Bacteria</taxon>
        <taxon>Bacillati</taxon>
        <taxon>Bacillota</taxon>
        <taxon>Clostridia</taxon>
        <taxon>Eubacteriales</taxon>
        <taxon>Clostridiaceae</taxon>
        <taxon>Clostridium</taxon>
    </lineage>
</organism>
<protein>
    <recommendedName>
        <fullName evidence="1">Chaperonin GroEL</fullName>
        <ecNumber evidence="1">5.6.1.7</ecNumber>
    </recommendedName>
    <alternativeName>
        <fullName evidence="1">60 kDa chaperonin</fullName>
    </alternativeName>
    <alternativeName>
        <fullName evidence="1">Chaperonin-60</fullName>
        <shortName evidence="1">Cpn60</shortName>
    </alternativeName>
</protein>